<keyword id="KW-0963">Cytoplasm</keyword>
<keyword id="KW-0238">DNA-binding</keyword>
<keyword id="KW-1185">Reference proteome</keyword>
<keyword id="KW-0731">Sigma factor</keyword>
<keyword id="KW-0804">Transcription</keyword>
<keyword id="KW-0805">Transcription regulation</keyword>
<protein>
    <recommendedName>
        <fullName evidence="2">RNA polymerase sigma factor SigA</fullName>
        <shortName>Sigma-A</shortName>
    </recommendedName>
</protein>
<comment type="function">
    <text evidence="2">Sigma factors are initiation factors that promote the attachment of RNA polymerase to specific initiation sites and are then released. This sigma factor is the primary sigma factor during exponential growth.</text>
</comment>
<comment type="subunit">
    <text evidence="2">Interacts transiently with the RNA polymerase catalytic core formed by RpoA, RpoB, RpoC and RpoZ (2 alpha, 1 beta, 1 beta' and 1 omega subunit) to form the RNA polymerase holoenzyme that can initiate transcription.</text>
</comment>
<comment type="subcellular location">
    <subcellularLocation>
        <location evidence="2">Cytoplasm</location>
    </subcellularLocation>
</comment>
<comment type="domain">
    <text evidence="1">The sigma-70 factor domain-2 mediates sequence-specific interaction with the -10 element in promoter DNA, and plays an important role in melting the double-stranded DNA and the formation of the transcription bubble. The sigma-70 factor domain-2 mediates interaction with the RNA polymerase subunits RpoB and RpoC (By similarity).</text>
</comment>
<comment type="domain">
    <text evidence="1">The sigma-70 factor domain-4 contains a helix-turn-helix (H-T-H) motif that mediates interaction with the -35 element in promoter DNA. The domain also mediates interaction with the RNA polymerase subunit RpoA (By similarity).</text>
</comment>
<comment type="similarity">
    <text evidence="2">Belongs to the sigma-70 factor family. RpoD/SigA subfamily.</text>
</comment>
<evidence type="ECO:0000250" key="1"/>
<evidence type="ECO:0000255" key="2">
    <source>
        <dbReference type="HAMAP-Rule" id="MF_00963"/>
    </source>
</evidence>
<evidence type="ECO:0000256" key="3">
    <source>
        <dbReference type="SAM" id="MobiDB-lite"/>
    </source>
</evidence>
<sequence>MAATKASTATDEPVKRTATKSPAASASGAKTGAKRTAAKSASGSPPAKRATKPAARSVKPASAPQDTTTSTIPKRKTRAAAKSAAAKAPSARGHATKPRAPKDAQHEAATDPEDALDSVEELDAEPDLDVEPGEDLDLDAADLNLDDLEDDVAPDADDDLDSGDDEDHEDLEAEAAVAPGQTADDDEEIAEPTEKDKASGDFVWDEDESEALRQARKDAELTASADSVRAYLKQIGKVALLNAEEEVELAKRIEAGLYATQLMTELSERGEKLPAAQRRDMMWICRDGDRAKNHLLEANLRLVVSLAKRYTGRGMAFLDLIQEGNLGLIRAVEKFDYTKGYKFSTYATWWIRQAITRAMADQARTIRIPVHMVEVINKLGRIQRELLQDLGREPTPEELAKEMDITPEKVLEIQQYAREPISLDQTIGDEGDSQLGDFIEDSEAVVAVDAVSFTLLQDQLQSVLDTLSEREAGVVRLRFGLTDGQPRTLDEIGQVYGVTRERIRQIESKTMSKLRHPSRSQVLRDYLD</sequence>
<dbReference type="EMBL" id="AE000516">
    <property type="protein sequence ID" value="AAK47092.1"/>
    <property type="molecule type" value="Genomic_DNA"/>
</dbReference>
<dbReference type="PIR" id="B70531">
    <property type="entry name" value="B70531"/>
</dbReference>
<dbReference type="RefSeq" id="WP_003413944.1">
    <property type="nucleotide sequence ID" value="NZ_KK341227.1"/>
</dbReference>
<dbReference type="EMDB" id="EMD-21406"/>
<dbReference type="EMDB" id="EMD-21407"/>
<dbReference type="EMDB" id="EMD-21408"/>
<dbReference type="EMDB" id="EMD-21409"/>
<dbReference type="EMDB" id="EMD-9037"/>
<dbReference type="EMDB" id="EMD-9039"/>
<dbReference type="EMDB" id="EMD-9041"/>
<dbReference type="EMDB" id="EMD-9047"/>
<dbReference type="SMR" id="P9WGI0"/>
<dbReference type="KEGG" id="mtc:MT2777"/>
<dbReference type="PATRIC" id="fig|83331.31.peg.2990"/>
<dbReference type="HOGENOM" id="CLU_014793_2_0_11"/>
<dbReference type="Proteomes" id="UP000001020">
    <property type="component" value="Chromosome"/>
</dbReference>
<dbReference type="GO" id="GO:0005737">
    <property type="term" value="C:cytoplasm"/>
    <property type="evidence" value="ECO:0007669"/>
    <property type="project" value="UniProtKB-SubCell"/>
</dbReference>
<dbReference type="GO" id="GO:0003677">
    <property type="term" value="F:DNA binding"/>
    <property type="evidence" value="ECO:0007669"/>
    <property type="project" value="UniProtKB-UniRule"/>
</dbReference>
<dbReference type="GO" id="GO:0016987">
    <property type="term" value="F:sigma factor activity"/>
    <property type="evidence" value="ECO:0007669"/>
    <property type="project" value="UniProtKB-UniRule"/>
</dbReference>
<dbReference type="GO" id="GO:0006352">
    <property type="term" value="P:DNA-templated transcription initiation"/>
    <property type="evidence" value="ECO:0007669"/>
    <property type="project" value="UniProtKB-UniRule"/>
</dbReference>
<dbReference type="CDD" id="cd06171">
    <property type="entry name" value="Sigma70_r4"/>
    <property type="match status" value="1"/>
</dbReference>
<dbReference type="FunFam" id="1.10.10.10:FF:000002">
    <property type="entry name" value="RNA polymerase sigma factor SigA"/>
    <property type="match status" value="1"/>
</dbReference>
<dbReference type="FunFam" id="1.10.10.10:FF:000004">
    <property type="entry name" value="RNA polymerase sigma factor SigA"/>
    <property type="match status" value="1"/>
</dbReference>
<dbReference type="FunFam" id="1.10.601.10:FF:000001">
    <property type="entry name" value="RNA polymerase sigma factor SigA"/>
    <property type="match status" value="1"/>
</dbReference>
<dbReference type="FunFam" id="1.10.601.10:FF:000003">
    <property type="entry name" value="RNA polymerase sigma factor SigA"/>
    <property type="match status" value="1"/>
</dbReference>
<dbReference type="Gene3D" id="1.10.601.10">
    <property type="entry name" value="RNA Polymerase Primary Sigma Factor"/>
    <property type="match status" value="2"/>
</dbReference>
<dbReference type="Gene3D" id="1.10.10.10">
    <property type="entry name" value="Winged helix-like DNA-binding domain superfamily/Winged helix DNA-binding domain"/>
    <property type="match status" value="2"/>
</dbReference>
<dbReference type="HAMAP" id="MF_00963">
    <property type="entry name" value="Sigma70_RpoD_SigA"/>
    <property type="match status" value="1"/>
</dbReference>
<dbReference type="InterPro" id="IPR014284">
    <property type="entry name" value="RNA_pol_sigma-70_dom"/>
</dbReference>
<dbReference type="InterPro" id="IPR000943">
    <property type="entry name" value="RNA_pol_sigma70"/>
</dbReference>
<dbReference type="InterPro" id="IPR009042">
    <property type="entry name" value="RNA_pol_sigma70_r1_2"/>
</dbReference>
<dbReference type="InterPro" id="IPR007627">
    <property type="entry name" value="RNA_pol_sigma70_r2"/>
</dbReference>
<dbReference type="InterPro" id="IPR007624">
    <property type="entry name" value="RNA_pol_sigma70_r3"/>
</dbReference>
<dbReference type="InterPro" id="IPR007630">
    <property type="entry name" value="RNA_pol_sigma70_r4"/>
</dbReference>
<dbReference type="InterPro" id="IPR013325">
    <property type="entry name" value="RNA_pol_sigma_r2"/>
</dbReference>
<dbReference type="InterPro" id="IPR013324">
    <property type="entry name" value="RNA_pol_sigma_r3/r4-like"/>
</dbReference>
<dbReference type="InterPro" id="IPR012760">
    <property type="entry name" value="RNA_pol_sigma_RpoD_C"/>
</dbReference>
<dbReference type="InterPro" id="IPR050239">
    <property type="entry name" value="Sigma-70_RNA_pol_init_factors"/>
</dbReference>
<dbReference type="InterPro" id="IPR028630">
    <property type="entry name" value="Sigma70_RpoD"/>
</dbReference>
<dbReference type="InterPro" id="IPR036388">
    <property type="entry name" value="WH-like_DNA-bd_sf"/>
</dbReference>
<dbReference type="NCBIfam" id="NF004560">
    <property type="entry name" value="PRK05901.1-1"/>
    <property type="match status" value="1"/>
</dbReference>
<dbReference type="NCBIfam" id="NF004561">
    <property type="entry name" value="PRK05901.1-3"/>
    <property type="match status" value="1"/>
</dbReference>
<dbReference type="NCBIfam" id="NF005920">
    <property type="entry name" value="PRK07921.1"/>
    <property type="match status" value="1"/>
</dbReference>
<dbReference type="NCBIfam" id="TIGR02393">
    <property type="entry name" value="RpoD_Cterm"/>
    <property type="match status" value="1"/>
</dbReference>
<dbReference type="NCBIfam" id="TIGR02937">
    <property type="entry name" value="sigma70-ECF"/>
    <property type="match status" value="1"/>
</dbReference>
<dbReference type="PANTHER" id="PTHR30603:SF59">
    <property type="entry name" value="RNA POLYMERASE PRINCIPAL SIGMA FACTOR HRDA"/>
    <property type="match status" value="1"/>
</dbReference>
<dbReference type="PANTHER" id="PTHR30603">
    <property type="entry name" value="RNA POLYMERASE SIGMA FACTOR RPO"/>
    <property type="match status" value="1"/>
</dbReference>
<dbReference type="Pfam" id="PF00140">
    <property type="entry name" value="Sigma70_r1_2"/>
    <property type="match status" value="1"/>
</dbReference>
<dbReference type="Pfam" id="PF04542">
    <property type="entry name" value="Sigma70_r2"/>
    <property type="match status" value="1"/>
</dbReference>
<dbReference type="Pfam" id="PF04539">
    <property type="entry name" value="Sigma70_r3"/>
    <property type="match status" value="1"/>
</dbReference>
<dbReference type="Pfam" id="PF04545">
    <property type="entry name" value="Sigma70_r4"/>
    <property type="match status" value="1"/>
</dbReference>
<dbReference type="PRINTS" id="PR00046">
    <property type="entry name" value="SIGMA70FCT"/>
</dbReference>
<dbReference type="SUPFAM" id="SSF88946">
    <property type="entry name" value="Sigma2 domain of RNA polymerase sigma factors"/>
    <property type="match status" value="1"/>
</dbReference>
<dbReference type="SUPFAM" id="SSF88659">
    <property type="entry name" value="Sigma3 and sigma4 domains of RNA polymerase sigma factors"/>
    <property type="match status" value="2"/>
</dbReference>
<dbReference type="PROSITE" id="PS00715">
    <property type="entry name" value="SIGMA70_1"/>
    <property type="match status" value="1"/>
</dbReference>
<dbReference type="PROSITE" id="PS00716">
    <property type="entry name" value="SIGMA70_2"/>
    <property type="match status" value="1"/>
</dbReference>
<proteinExistence type="inferred from homology"/>
<reference key="1">
    <citation type="journal article" date="2002" name="J. Bacteriol.">
        <title>Whole-genome comparison of Mycobacterium tuberculosis clinical and laboratory strains.</title>
        <authorList>
            <person name="Fleischmann R.D."/>
            <person name="Alland D."/>
            <person name="Eisen J.A."/>
            <person name="Carpenter L."/>
            <person name="White O."/>
            <person name="Peterson J.D."/>
            <person name="DeBoy R.T."/>
            <person name="Dodson R.J."/>
            <person name="Gwinn M.L."/>
            <person name="Haft D.H."/>
            <person name="Hickey E.K."/>
            <person name="Kolonay J.F."/>
            <person name="Nelson W.C."/>
            <person name="Umayam L.A."/>
            <person name="Ermolaeva M.D."/>
            <person name="Salzberg S.L."/>
            <person name="Delcher A."/>
            <person name="Utterback T.R."/>
            <person name="Weidman J.F."/>
            <person name="Khouri H.M."/>
            <person name="Gill J."/>
            <person name="Mikula A."/>
            <person name="Bishai W."/>
            <person name="Jacobs W.R. Jr."/>
            <person name="Venter J.C."/>
            <person name="Fraser C.M."/>
        </authorList>
    </citation>
    <scope>NUCLEOTIDE SEQUENCE [LARGE SCALE GENOMIC DNA]</scope>
    <source>
        <strain>CDC 1551 / Oshkosh</strain>
    </source>
</reference>
<accession>P9WGI0</accession>
<accession>L0TAM5</accession>
<accession>O08495</accession>
<accession>O08513</accession>
<accession>P0A602</accession>
<accession>Q60162</accession>
<feature type="chain" id="PRO_0000428358" description="RNA polymerase sigma factor SigA">
    <location>
        <begin position="1"/>
        <end position="528"/>
    </location>
</feature>
<feature type="DNA-binding region" description="H-T-H motif" evidence="2">
    <location>
        <begin position="489"/>
        <end position="508"/>
    </location>
</feature>
<feature type="region of interest" description="Disordered" evidence="3">
    <location>
        <begin position="1"/>
        <end position="211"/>
    </location>
</feature>
<feature type="region of interest" description="Sigma-70 factor domain-1">
    <location>
        <begin position="225"/>
        <end position="259"/>
    </location>
</feature>
<feature type="region of interest" description="Sigma-70 factor domain-2">
    <location>
        <begin position="295"/>
        <end position="365"/>
    </location>
</feature>
<feature type="region of interest" description="Sigma-70 factor domain-3">
    <location>
        <begin position="374"/>
        <end position="450"/>
    </location>
</feature>
<feature type="region of interest" description="Sigma-70 factor domain-4">
    <location>
        <begin position="463"/>
        <end position="516"/>
    </location>
</feature>
<feature type="short sequence motif" description="Interaction with polymerase core subunit RpoC">
    <location>
        <begin position="319"/>
        <end position="322"/>
    </location>
</feature>
<feature type="compositionally biased region" description="Polar residues" evidence="3">
    <location>
        <begin position="1"/>
        <end position="10"/>
    </location>
</feature>
<feature type="compositionally biased region" description="Low complexity" evidence="3">
    <location>
        <begin position="19"/>
        <end position="31"/>
    </location>
</feature>
<feature type="compositionally biased region" description="Low complexity" evidence="3">
    <location>
        <begin position="38"/>
        <end position="56"/>
    </location>
</feature>
<feature type="compositionally biased region" description="Low complexity" evidence="3">
    <location>
        <begin position="80"/>
        <end position="92"/>
    </location>
</feature>
<feature type="compositionally biased region" description="Basic and acidic residues" evidence="3">
    <location>
        <begin position="100"/>
        <end position="109"/>
    </location>
</feature>
<feature type="compositionally biased region" description="Acidic residues" evidence="3">
    <location>
        <begin position="110"/>
        <end position="173"/>
    </location>
</feature>
<name>SIGA_MYCTO</name>
<organism>
    <name type="scientific">Mycobacterium tuberculosis (strain CDC 1551 / Oshkosh)</name>
    <dbReference type="NCBI Taxonomy" id="83331"/>
    <lineage>
        <taxon>Bacteria</taxon>
        <taxon>Bacillati</taxon>
        <taxon>Actinomycetota</taxon>
        <taxon>Actinomycetes</taxon>
        <taxon>Mycobacteriales</taxon>
        <taxon>Mycobacteriaceae</taxon>
        <taxon>Mycobacterium</taxon>
        <taxon>Mycobacterium tuberculosis complex</taxon>
    </lineage>
</organism>
<gene>
    <name evidence="2" type="primary">sigA</name>
    <name type="synonym">mysA</name>
    <name type="synonym">rpoD</name>
    <name type="synonym">rpoV</name>
    <name type="ordered locus">MT2777</name>
</gene>